<gene>
    <name evidence="1" type="primary">rpsT</name>
    <name type="ordered locus">COPRO5265_0755</name>
</gene>
<organism>
    <name type="scientific">Coprothermobacter proteolyticus (strain ATCC 35245 / DSM 5265 / OCM 4 / BT)</name>
    <dbReference type="NCBI Taxonomy" id="309798"/>
    <lineage>
        <taxon>Bacteria</taxon>
        <taxon>Pseudomonadati</taxon>
        <taxon>Coprothermobacterota</taxon>
        <taxon>Coprothermobacteria</taxon>
        <taxon>Coprothermobacterales</taxon>
        <taxon>Coprothermobacteraceae</taxon>
        <taxon>Coprothermobacter</taxon>
    </lineage>
</organism>
<proteinExistence type="inferred from homology"/>
<evidence type="ECO:0000255" key="1">
    <source>
        <dbReference type="HAMAP-Rule" id="MF_00500"/>
    </source>
</evidence>
<evidence type="ECO:0000305" key="2"/>
<dbReference type="EMBL" id="CP001145">
    <property type="protein sequence ID" value="ACI17492.1"/>
    <property type="molecule type" value="Genomic_DNA"/>
</dbReference>
<dbReference type="RefSeq" id="WP_012544144.1">
    <property type="nucleotide sequence ID" value="NC_011295.1"/>
</dbReference>
<dbReference type="SMR" id="B5Y8K5"/>
<dbReference type="STRING" id="309798.COPRO5265_0755"/>
<dbReference type="KEGG" id="cpo:COPRO5265_0755"/>
<dbReference type="eggNOG" id="COG0268">
    <property type="taxonomic scope" value="Bacteria"/>
</dbReference>
<dbReference type="HOGENOM" id="CLU_160655_4_0_9"/>
<dbReference type="OrthoDB" id="9808392at2"/>
<dbReference type="Proteomes" id="UP000001732">
    <property type="component" value="Chromosome"/>
</dbReference>
<dbReference type="GO" id="GO:0005829">
    <property type="term" value="C:cytosol"/>
    <property type="evidence" value="ECO:0007669"/>
    <property type="project" value="TreeGrafter"/>
</dbReference>
<dbReference type="GO" id="GO:0015935">
    <property type="term" value="C:small ribosomal subunit"/>
    <property type="evidence" value="ECO:0007669"/>
    <property type="project" value="TreeGrafter"/>
</dbReference>
<dbReference type="GO" id="GO:0070181">
    <property type="term" value="F:small ribosomal subunit rRNA binding"/>
    <property type="evidence" value="ECO:0007669"/>
    <property type="project" value="TreeGrafter"/>
</dbReference>
<dbReference type="GO" id="GO:0003735">
    <property type="term" value="F:structural constituent of ribosome"/>
    <property type="evidence" value="ECO:0007669"/>
    <property type="project" value="InterPro"/>
</dbReference>
<dbReference type="GO" id="GO:0006412">
    <property type="term" value="P:translation"/>
    <property type="evidence" value="ECO:0007669"/>
    <property type="project" value="UniProtKB-UniRule"/>
</dbReference>
<dbReference type="FunFam" id="1.20.58.110:FF:000001">
    <property type="entry name" value="30S ribosomal protein S20"/>
    <property type="match status" value="1"/>
</dbReference>
<dbReference type="Gene3D" id="1.20.58.110">
    <property type="entry name" value="Ribosomal protein S20"/>
    <property type="match status" value="1"/>
</dbReference>
<dbReference type="HAMAP" id="MF_00500">
    <property type="entry name" value="Ribosomal_bS20"/>
    <property type="match status" value="1"/>
</dbReference>
<dbReference type="InterPro" id="IPR002583">
    <property type="entry name" value="Ribosomal_bS20"/>
</dbReference>
<dbReference type="InterPro" id="IPR036510">
    <property type="entry name" value="Ribosomal_bS20_sf"/>
</dbReference>
<dbReference type="NCBIfam" id="TIGR00029">
    <property type="entry name" value="S20"/>
    <property type="match status" value="1"/>
</dbReference>
<dbReference type="PANTHER" id="PTHR33398">
    <property type="entry name" value="30S RIBOSOMAL PROTEIN S20"/>
    <property type="match status" value="1"/>
</dbReference>
<dbReference type="PANTHER" id="PTHR33398:SF1">
    <property type="entry name" value="SMALL RIBOSOMAL SUBUNIT PROTEIN BS20C"/>
    <property type="match status" value="1"/>
</dbReference>
<dbReference type="Pfam" id="PF01649">
    <property type="entry name" value="Ribosomal_S20p"/>
    <property type="match status" value="1"/>
</dbReference>
<dbReference type="SUPFAM" id="SSF46992">
    <property type="entry name" value="Ribosomal protein S20"/>
    <property type="match status" value="1"/>
</dbReference>
<protein>
    <recommendedName>
        <fullName evidence="1">Small ribosomal subunit protein bS20</fullName>
    </recommendedName>
    <alternativeName>
        <fullName evidence="2">30S ribosomal protein S20</fullName>
    </alternativeName>
</protein>
<feature type="chain" id="PRO_1000126426" description="Small ribosomal subunit protein bS20">
    <location>
        <begin position="1"/>
        <end position="88"/>
    </location>
</feature>
<comment type="function">
    <text evidence="1">Binds directly to 16S ribosomal RNA.</text>
</comment>
<comment type="similarity">
    <text evidence="1">Belongs to the bacterial ribosomal protein bS20 family.</text>
</comment>
<sequence length="88" mass="10199">MANTISAERRIRLTKKETAYNRYWRTTMKTYVKRAKKAIESGDREAAEAAVLKAQSVIDKVAVKGVIHKNEAARRKSRLMKLFNQKFQ</sequence>
<name>RS20_COPPD</name>
<reference key="1">
    <citation type="submission" date="2008-08" db="EMBL/GenBank/DDBJ databases">
        <title>The complete genome sequence of Coprothermobacter proteolyticus strain ATCC 5245 / DSM 5265 / BT.</title>
        <authorList>
            <person name="Dodson R.J."/>
            <person name="Durkin A.S."/>
            <person name="Wu M."/>
            <person name="Eisen J."/>
            <person name="Sutton G."/>
        </authorList>
    </citation>
    <scope>NUCLEOTIDE SEQUENCE [LARGE SCALE GENOMIC DNA]</scope>
    <source>
        <strain>ATCC 35245 / DSM 5265 / OCM 4 / BT</strain>
    </source>
</reference>
<accession>B5Y8K5</accession>
<keyword id="KW-1185">Reference proteome</keyword>
<keyword id="KW-0687">Ribonucleoprotein</keyword>
<keyword id="KW-0689">Ribosomal protein</keyword>
<keyword id="KW-0694">RNA-binding</keyword>
<keyword id="KW-0699">rRNA-binding</keyword>